<protein>
    <recommendedName>
        <fullName evidence="1">Probable cell division protein WhiA</fullName>
    </recommendedName>
</protein>
<proteinExistence type="inferred from homology"/>
<reference key="1">
    <citation type="journal article" date="2002" name="Proc. Natl. Acad. Sci. U.S.A.">
        <title>Genome sequence of a serotype M3 strain of group A Streptococcus: phage-encoded toxins, the high-virulence phenotype, and clone emergence.</title>
        <authorList>
            <person name="Beres S.B."/>
            <person name="Sylva G.L."/>
            <person name="Barbian K.D."/>
            <person name="Lei B."/>
            <person name="Hoff J.S."/>
            <person name="Mammarella N.D."/>
            <person name="Liu M.-Y."/>
            <person name="Smoot J.C."/>
            <person name="Porcella S.F."/>
            <person name="Parkins L.D."/>
            <person name="Campbell D.S."/>
            <person name="Smith T.M."/>
            <person name="McCormick J.K."/>
            <person name="Leung D.Y.M."/>
            <person name="Schlievert P.M."/>
            <person name="Musser J.M."/>
        </authorList>
    </citation>
    <scope>NUCLEOTIDE SEQUENCE [LARGE SCALE GENOMIC DNA]</scope>
    <source>
        <strain>ATCC BAA-595 / MGAS315</strain>
    </source>
</reference>
<organism>
    <name type="scientific">Streptococcus pyogenes serotype M3 (strain ATCC BAA-595 / MGAS315)</name>
    <dbReference type="NCBI Taxonomy" id="198466"/>
    <lineage>
        <taxon>Bacteria</taxon>
        <taxon>Bacillati</taxon>
        <taxon>Bacillota</taxon>
        <taxon>Bacilli</taxon>
        <taxon>Lactobacillales</taxon>
        <taxon>Streptococcaceae</taxon>
        <taxon>Streptococcus</taxon>
    </lineage>
</organism>
<sequence length="303" mass="33949">MSFTTKVKEELIHLSTGDNNELAAIIKLSGSLGLAHQSLHLSITTENAKIARYIYSFIEDAYVIVPEIRYHQKTNLRKNRVYTVYVEQGVETILADLKLADSFFGLETGIEPQVLSDDNAGRSYLKGAFLAAGSIRDPESGKYQLEIYSVYLDHAQDLAQLMQKFMLDAKTIEHKSGAVTYLQKAEDIMDFLIIIGAMSCKEDFEAIKLLREARNDINRANNAETANIAKTISASMKTINNIIKIMDTIGLESLPIELQQVAQLRVKHPDYSIQQVADALEFPITKSGVNHRLRKINKIADDL</sequence>
<comment type="function">
    <text evidence="1">Involved in cell division and chromosome segregation.</text>
</comment>
<comment type="similarity">
    <text evidence="1">Belongs to the WhiA family.</text>
</comment>
<gene>
    <name evidence="1" type="primary">whiA</name>
    <name type="ordered locus">SpyM3_0464</name>
</gene>
<keyword id="KW-0131">Cell cycle</keyword>
<keyword id="KW-0132">Cell division</keyword>
<keyword id="KW-0238">DNA-binding</keyword>
<feature type="chain" id="PRO_0000376588" description="Probable cell division protein WhiA">
    <location>
        <begin position="1"/>
        <end position="303"/>
    </location>
</feature>
<feature type="DNA-binding region" description="H-T-H motif" evidence="1">
    <location>
        <begin position="272"/>
        <end position="303"/>
    </location>
</feature>
<accession>P0DH42</accession>
<accession>Q79WN1</accession>
<accession>Q8K849</accession>
<name>WHIA_STRP3</name>
<dbReference type="EMBL" id="AE014074">
    <property type="protein sequence ID" value="AAM79071.1"/>
    <property type="molecule type" value="Genomic_DNA"/>
</dbReference>
<dbReference type="RefSeq" id="WP_011054317.1">
    <property type="nucleotide sequence ID" value="NC_004070.1"/>
</dbReference>
<dbReference type="SMR" id="P0DH42"/>
<dbReference type="GeneID" id="69901150"/>
<dbReference type="KEGG" id="spg:SpyM3_0464"/>
<dbReference type="HOGENOM" id="CLU_053282_0_0_9"/>
<dbReference type="Proteomes" id="UP000000564">
    <property type="component" value="Chromosome"/>
</dbReference>
<dbReference type="GO" id="GO:0003677">
    <property type="term" value="F:DNA binding"/>
    <property type="evidence" value="ECO:0007669"/>
    <property type="project" value="UniProtKB-UniRule"/>
</dbReference>
<dbReference type="GO" id="GO:0051301">
    <property type="term" value="P:cell division"/>
    <property type="evidence" value="ECO:0007669"/>
    <property type="project" value="UniProtKB-UniRule"/>
</dbReference>
<dbReference type="GO" id="GO:0043937">
    <property type="term" value="P:regulation of sporulation"/>
    <property type="evidence" value="ECO:0007669"/>
    <property type="project" value="InterPro"/>
</dbReference>
<dbReference type="Gene3D" id="3.10.28.10">
    <property type="entry name" value="Homing endonucleases"/>
    <property type="match status" value="1"/>
</dbReference>
<dbReference type="HAMAP" id="MF_01420">
    <property type="entry name" value="HTH_type_WhiA"/>
    <property type="match status" value="1"/>
</dbReference>
<dbReference type="InterPro" id="IPR027434">
    <property type="entry name" value="Homing_endonucl"/>
</dbReference>
<dbReference type="InterPro" id="IPR018478">
    <property type="entry name" value="Sporu_reg_WhiA_N_dom"/>
</dbReference>
<dbReference type="InterPro" id="IPR003802">
    <property type="entry name" value="Sporulation_regulator_WhiA"/>
</dbReference>
<dbReference type="InterPro" id="IPR023054">
    <property type="entry name" value="Sporulation_regulator_WhiA_C"/>
</dbReference>
<dbReference type="InterPro" id="IPR039518">
    <property type="entry name" value="WhiA_LAGLIDADG_dom"/>
</dbReference>
<dbReference type="NCBIfam" id="TIGR00647">
    <property type="entry name" value="DNA_bind_WhiA"/>
    <property type="match status" value="1"/>
</dbReference>
<dbReference type="PANTHER" id="PTHR37307">
    <property type="entry name" value="CELL DIVISION PROTEIN WHIA-RELATED"/>
    <property type="match status" value="1"/>
</dbReference>
<dbReference type="PANTHER" id="PTHR37307:SF1">
    <property type="entry name" value="CELL DIVISION PROTEIN WHIA-RELATED"/>
    <property type="match status" value="1"/>
</dbReference>
<dbReference type="Pfam" id="PF02650">
    <property type="entry name" value="HTH_WhiA"/>
    <property type="match status" value="1"/>
</dbReference>
<dbReference type="Pfam" id="PF14527">
    <property type="entry name" value="LAGLIDADG_WhiA"/>
    <property type="match status" value="1"/>
</dbReference>
<dbReference type="Pfam" id="PF10298">
    <property type="entry name" value="WhiA_N"/>
    <property type="match status" value="1"/>
</dbReference>
<dbReference type="SUPFAM" id="SSF55608">
    <property type="entry name" value="Homing endonucleases"/>
    <property type="match status" value="1"/>
</dbReference>
<evidence type="ECO:0000255" key="1">
    <source>
        <dbReference type="HAMAP-Rule" id="MF_01420"/>
    </source>
</evidence>